<feature type="initiator methionine" description="Removed" evidence="1 2">
    <location>
        <position position="1"/>
    </location>
</feature>
<feature type="chain" id="PRO_0000134130" description="Small ribosomal subunit protein uS2">
    <location>
        <begin position="2"/>
        <end position="235"/>
    </location>
</feature>
<feature type="sequence conflict" description="In Ref. 2; AA sequence." evidence="3" ref="2">
    <original>A</original>
    <variation>S</variation>
    <location>
        <position position="12"/>
    </location>
</feature>
<name>RS2_GEOSE</name>
<sequence>MSVISMKQLLEAGVHFGWQTRRWNPKMKKYIFTERNGIYLIDIQKTVKKVEEAYNFVRELAANGGKILFVGTKRQAQESVKEEAERCGMFYVNQRRIGGTLTNFATLQKRIKRLREIEKMEEDGVFDVLPKKEVIGLKKEKERLEKFIGGIKDMKELPDALFVIDPRKERIAVAEARKLNIPIIGIVDTNNDPCEGGYVIPANDDAIRAVKLLTSKIADAVLEAKQGEEAAVAAE</sequence>
<comment type="similarity">
    <text evidence="3">Belongs to the universal ribosomal protein uS2 family.</text>
</comment>
<keyword id="KW-0903">Direct protein sequencing</keyword>
<keyword id="KW-0687">Ribonucleoprotein</keyword>
<keyword id="KW-0689">Ribosomal protein</keyword>
<proteinExistence type="evidence at protein level"/>
<dbReference type="SMR" id="P81289"/>
<dbReference type="GO" id="GO:0022627">
    <property type="term" value="C:cytosolic small ribosomal subunit"/>
    <property type="evidence" value="ECO:0007669"/>
    <property type="project" value="TreeGrafter"/>
</dbReference>
<dbReference type="GO" id="GO:0003735">
    <property type="term" value="F:structural constituent of ribosome"/>
    <property type="evidence" value="ECO:0007669"/>
    <property type="project" value="InterPro"/>
</dbReference>
<dbReference type="GO" id="GO:0006412">
    <property type="term" value="P:translation"/>
    <property type="evidence" value="ECO:0007669"/>
    <property type="project" value="UniProtKB-UniRule"/>
</dbReference>
<dbReference type="CDD" id="cd01425">
    <property type="entry name" value="RPS2"/>
    <property type="match status" value="1"/>
</dbReference>
<dbReference type="FunFam" id="1.10.287.610:FF:000001">
    <property type="entry name" value="30S ribosomal protein S2"/>
    <property type="match status" value="1"/>
</dbReference>
<dbReference type="Gene3D" id="3.40.50.10490">
    <property type="entry name" value="Glucose-6-phosphate isomerase like protein, domain 1"/>
    <property type="match status" value="1"/>
</dbReference>
<dbReference type="Gene3D" id="1.10.287.610">
    <property type="entry name" value="Helix hairpin bin"/>
    <property type="match status" value="1"/>
</dbReference>
<dbReference type="HAMAP" id="MF_00291_B">
    <property type="entry name" value="Ribosomal_uS2_B"/>
    <property type="match status" value="1"/>
</dbReference>
<dbReference type="InterPro" id="IPR001865">
    <property type="entry name" value="Ribosomal_uS2"/>
</dbReference>
<dbReference type="InterPro" id="IPR005706">
    <property type="entry name" value="Ribosomal_uS2_bac/mit/plastid"/>
</dbReference>
<dbReference type="InterPro" id="IPR018130">
    <property type="entry name" value="Ribosomal_uS2_CS"/>
</dbReference>
<dbReference type="InterPro" id="IPR023591">
    <property type="entry name" value="Ribosomal_uS2_flav_dom_sf"/>
</dbReference>
<dbReference type="NCBIfam" id="TIGR01011">
    <property type="entry name" value="rpsB_bact"/>
    <property type="match status" value="1"/>
</dbReference>
<dbReference type="PANTHER" id="PTHR12534">
    <property type="entry name" value="30S RIBOSOMAL PROTEIN S2 PROKARYOTIC AND ORGANELLAR"/>
    <property type="match status" value="1"/>
</dbReference>
<dbReference type="PANTHER" id="PTHR12534:SF0">
    <property type="entry name" value="SMALL RIBOSOMAL SUBUNIT PROTEIN US2M"/>
    <property type="match status" value="1"/>
</dbReference>
<dbReference type="Pfam" id="PF00318">
    <property type="entry name" value="Ribosomal_S2"/>
    <property type="match status" value="1"/>
</dbReference>
<dbReference type="PRINTS" id="PR00395">
    <property type="entry name" value="RIBOSOMALS2"/>
</dbReference>
<dbReference type="SUPFAM" id="SSF52313">
    <property type="entry name" value="Ribosomal protein S2"/>
    <property type="match status" value="1"/>
</dbReference>
<dbReference type="PROSITE" id="PS00962">
    <property type="entry name" value="RIBOSOMAL_S2_1"/>
    <property type="match status" value="1"/>
</dbReference>
<dbReference type="PROSITE" id="PS00963">
    <property type="entry name" value="RIBOSOMAL_S2_2"/>
    <property type="match status" value="1"/>
</dbReference>
<organism>
    <name type="scientific">Geobacillus stearothermophilus</name>
    <name type="common">Bacillus stearothermophilus</name>
    <dbReference type="NCBI Taxonomy" id="1422"/>
    <lineage>
        <taxon>Bacteria</taxon>
        <taxon>Bacillati</taxon>
        <taxon>Bacillota</taxon>
        <taxon>Bacilli</taxon>
        <taxon>Bacillales</taxon>
        <taxon>Anoxybacillaceae</taxon>
        <taxon>Geobacillus</taxon>
    </lineage>
</organism>
<accession>P81289</accession>
<reference key="1">
    <citation type="journal article" date="1991" name="Biochimie">
        <title>Primary structures of ribosomal proteins from the archaebacterium Halobacterium marismortui and the eubacterium Bacillus stearothermophilus.</title>
        <authorList>
            <person name="Arndt E."/>
            <person name="Scholzen T."/>
            <person name="Kromer W."/>
            <person name="Hatakeyama T."/>
            <person name="Kimura M."/>
        </authorList>
    </citation>
    <scope>PROTEIN SEQUENCE OF 2-235</scope>
</reference>
<reference key="2">
    <citation type="journal article" date="1974" name="FEBS Lett.">
        <title>Procaryotic ribosomal proteins: N-terminal sequence homologies and structural correspondence of 30 S ribosomal proteins from Escherichia coli and Bacillus stearothermophilus.</title>
        <authorList>
            <person name="Yaguchi M."/>
            <person name="Matheson A.T."/>
            <person name="Visentin L.P."/>
        </authorList>
    </citation>
    <scope>PROTEIN SEQUENCE OF 2-16</scope>
    <source>
        <strain>DSM 13240 / CIP 106956 / 10</strain>
    </source>
</reference>
<evidence type="ECO:0000269" key="1">
    <source>
    </source>
</evidence>
<evidence type="ECO:0000269" key="2">
    <source>
    </source>
</evidence>
<evidence type="ECO:0000305" key="3"/>
<protein>
    <recommendedName>
        <fullName evidence="3">Small ribosomal subunit protein uS2</fullName>
    </recommendedName>
    <alternativeName>
        <fullName>30S ribosomal protein S2</fullName>
    </alternativeName>
    <alternativeName>
        <fullName>BS2a</fullName>
    </alternativeName>
</protein>
<gene>
    <name type="primary">rpsB</name>
</gene>